<sequence length="203" mass="22485">MANLLIVKAHPLDAQKSYALRALEEFQTRYASLHPEDRIEIVDVFEDQIPALDKPLLEAMGAAKRGEAISPEQAEQLGRYNALTQQFLAADKIVVVNPLWNLNVPSQLVSWINTINVAGLTFKYGPEGSIGLVKGKKLLHIQSNGGVYAGQDPAAQYIKSIFEFLGFEDIHQVFIEGQSADPSQSQVIFEEAMAKIDQILESY</sequence>
<comment type="function">
    <text evidence="1">Quinone reductase that provides resistance to thiol-specific stress caused by electrophilic quinones.</text>
</comment>
<comment type="function">
    <text evidence="1">Also exhibits azoreductase activity. Catalyzes the reductive cleavage of the azo bond in aromatic azo compounds to the corresponding amines.</text>
</comment>
<comment type="catalytic activity">
    <reaction evidence="1">
        <text>2 a quinone + NADH + H(+) = 2 a 1,4-benzosemiquinone + NAD(+)</text>
        <dbReference type="Rhea" id="RHEA:65952"/>
        <dbReference type="ChEBI" id="CHEBI:15378"/>
        <dbReference type="ChEBI" id="CHEBI:57540"/>
        <dbReference type="ChEBI" id="CHEBI:57945"/>
        <dbReference type="ChEBI" id="CHEBI:132124"/>
        <dbReference type="ChEBI" id="CHEBI:134225"/>
    </reaction>
</comment>
<comment type="catalytic activity">
    <reaction evidence="1">
        <text>N,N-dimethyl-1,4-phenylenediamine + anthranilate + 2 NAD(+) = 2-(4-dimethylaminophenyl)diazenylbenzoate + 2 NADH + 2 H(+)</text>
        <dbReference type="Rhea" id="RHEA:55872"/>
        <dbReference type="ChEBI" id="CHEBI:15378"/>
        <dbReference type="ChEBI" id="CHEBI:15783"/>
        <dbReference type="ChEBI" id="CHEBI:16567"/>
        <dbReference type="ChEBI" id="CHEBI:57540"/>
        <dbReference type="ChEBI" id="CHEBI:57945"/>
        <dbReference type="ChEBI" id="CHEBI:71579"/>
        <dbReference type="EC" id="1.7.1.17"/>
    </reaction>
</comment>
<comment type="cofactor">
    <cofactor evidence="1">
        <name>FMN</name>
        <dbReference type="ChEBI" id="CHEBI:58210"/>
    </cofactor>
    <text evidence="1">Binds 1 FMN per subunit.</text>
</comment>
<comment type="subunit">
    <text evidence="1">Homodimer.</text>
</comment>
<comment type="similarity">
    <text evidence="1">Belongs to the azoreductase type 1 family.</text>
</comment>
<gene>
    <name evidence="1" type="primary">azoR</name>
    <name type="ordered locus">SSU98_1578</name>
</gene>
<feature type="chain" id="PRO_1000066533" description="FMN-dependent NADH:quinone oxidoreductase">
    <location>
        <begin position="1"/>
        <end position="203"/>
    </location>
</feature>
<feature type="binding site" evidence="1">
    <location>
        <begin position="143"/>
        <end position="146"/>
    </location>
    <ligand>
        <name>FMN</name>
        <dbReference type="ChEBI" id="CHEBI:58210"/>
    </ligand>
</feature>
<protein>
    <recommendedName>
        <fullName evidence="1">FMN-dependent NADH:quinone oxidoreductase</fullName>
        <ecNumber evidence="1">1.6.5.-</ecNumber>
    </recommendedName>
    <alternativeName>
        <fullName evidence="1">Azo-dye reductase</fullName>
    </alternativeName>
    <alternativeName>
        <fullName evidence="1">FMN-dependent NADH-azo compound oxidoreductase</fullName>
    </alternativeName>
    <alternativeName>
        <fullName evidence="1">FMN-dependent NADH-azoreductase</fullName>
        <ecNumber evidence="1">1.7.1.17</ecNumber>
    </alternativeName>
</protein>
<proteinExistence type="inferred from homology"/>
<accession>A4W2Z7</accession>
<reference key="1">
    <citation type="journal article" date="2007" name="PLoS ONE">
        <title>A glimpse of streptococcal toxic shock syndrome from comparative genomics of S. suis 2 Chinese isolates.</title>
        <authorList>
            <person name="Chen C."/>
            <person name="Tang J."/>
            <person name="Dong W."/>
            <person name="Wang C."/>
            <person name="Feng Y."/>
            <person name="Wang J."/>
            <person name="Zheng F."/>
            <person name="Pan X."/>
            <person name="Liu D."/>
            <person name="Li M."/>
            <person name="Song Y."/>
            <person name="Zhu X."/>
            <person name="Sun H."/>
            <person name="Feng T."/>
            <person name="Guo Z."/>
            <person name="Ju A."/>
            <person name="Ge J."/>
            <person name="Dong Y."/>
            <person name="Sun W."/>
            <person name="Jiang Y."/>
            <person name="Wang J."/>
            <person name="Yan J."/>
            <person name="Yang H."/>
            <person name="Wang X."/>
            <person name="Gao G.F."/>
            <person name="Yang R."/>
            <person name="Wang J."/>
            <person name="Yu J."/>
        </authorList>
    </citation>
    <scope>NUCLEOTIDE SEQUENCE [LARGE SCALE GENOMIC DNA]</scope>
    <source>
        <strain>98HAH33</strain>
    </source>
</reference>
<evidence type="ECO:0000255" key="1">
    <source>
        <dbReference type="HAMAP-Rule" id="MF_01216"/>
    </source>
</evidence>
<dbReference type="EC" id="1.6.5.-" evidence="1"/>
<dbReference type="EC" id="1.7.1.17" evidence="1"/>
<dbReference type="EMBL" id="CP000408">
    <property type="protein sequence ID" value="ABP92736.1"/>
    <property type="molecule type" value="Genomic_DNA"/>
</dbReference>
<dbReference type="SMR" id="A4W2Z7"/>
<dbReference type="KEGG" id="ssv:SSU98_1578"/>
<dbReference type="HOGENOM" id="CLU_088964_3_0_9"/>
<dbReference type="GO" id="GO:0009055">
    <property type="term" value="F:electron transfer activity"/>
    <property type="evidence" value="ECO:0007669"/>
    <property type="project" value="UniProtKB-UniRule"/>
</dbReference>
<dbReference type="GO" id="GO:0010181">
    <property type="term" value="F:FMN binding"/>
    <property type="evidence" value="ECO:0007669"/>
    <property type="project" value="UniProtKB-UniRule"/>
</dbReference>
<dbReference type="GO" id="GO:0016652">
    <property type="term" value="F:oxidoreductase activity, acting on NAD(P)H as acceptor"/>
    <property type="evidence" value="ECO:0007669"/>
    <property type="project" value="UniProtKB-UniRule"/>
</dbReference>
<dbReference type="GO" id="GO:0016655">
    <property type="term" value="F:oxidoreductase activity, acting on NAD(P)H, quinone or similar compound as acceptor"/>
    <property type="evidence" value="ECO:0007669"/>
    <property type="project" value="InterPro"/>
</dbReference>
<dbReference type="Gene3D" id="3.40.50.360">
    <property type="match status" value="1"/>
</dbReference>
<dbReference type="HAMAP" id="MF_01216">
    <property type="entry name" value="Azoreductase_type1"/>
    <property type="match status" value="1"/>
</dbReference>
<dbReference type="InterPro" id="IPR003680">
    <property type="entry name" value="Flavodoxin_fold"/>
</dbReference>
<dbReference type="InterPro" id="IPR029039">
    <property type="entry name" value="Flavoprotein-like_sf"/>
</dbReference>
<dbReference type="InterPro" id="IPR050104">
    <property type="entry name" value="FMN-dep_NADH:Q_OxRdtase_AzoR1"/>
</dbReference>
<dbReference type="InterPro" id="IPR023048">
    <property type="entry name" value="NADH:quinone_OxRdtase_FMN_depd"/>
</dbReference>
<dbReference type="PANTHER" id="PTHR43741">
    <property type="entry name" value="FMN-DEPENDENT NADH-AZOREDUCTASE 1"/>
    <property type="match status" value="1"/>
</dbReference>
<dbReference type="PANTHER" id="PTHR43741:SF7">
    <property type="entry name" value="FMN-DEPENDENT NADH:QUINONE OXIDOREDUCTASE"/>
    <property type="match status" value="1"/>
</dbReference>
<dbReference type="Pfam" id="PF02525">
    <property type="entry name" value="Flavodoxin_2"/>
    <property type="match status" value="1"/>
</dbReference>
<dbReference type="SUPFAM" id="SSF52218">
    <property type="entry name" value="Flavoproteins"/>
    <property type="match status" value="1"/>
</dbReference>
<organism>
    <name type="scientific">Streptococcus suis (strain 98HAH33)</name>
    <dbReference type="NCBI Taxonomy" id="391296"/>
    <lineage>
        <taxon>Bacteria</taxon>
        <taxon>Bacillati</taxon>
        <taxon>Bacillota</taxon>
        <taxon>Bacilli</taxon>
        <taxon>Lactobacillales</taxon>
        <taxon>Streptococcaceae</taxon>
        <taxon>Streptococcus</taxon>
    </lineage>
</organism>
<keyword id="KW-0285">Flavoprotein</keyword>
<keyword id="KW-0288">FMN</keyword>
<keyword id="KW-0520">NAD</keyword>
<keyword id="KW-0560">Oxidoreductase</keyword>
<name>AZOR_STRS2</name>